<dbReference type="EMBL" id="AE000512">
    <property type="protein sequence ID" value="AAD36395.1"/>
    <property type="molecule type" value="Genomic_DNA"/>
</dbReference>
<dbReference type="EMBL" id="AE000512">
    <property type="protein sequence ID" value="AAD36405.1"/>
    <property type="molecule type" value="Genomic_DNA"/>
</dbReference>
<dbReference type="PIR" id="A72268">
    <property type="entry name" value="A72268"/>
</dbReference>
<dbReference type="RefSeq" id="NP_229125.1">
    <property type="nucleotide sequence ID" value="NC_000853.1"/>
</dbReference>
<dbReference type="RefSeq" id="NP_229135.1">
    <property type="nucleotide sequence ID" value="NC_000853.1"/>
</dbReference>
<dbReference type="SMR" id="Q9WW67"/>
<dbReference type="STRING" id="243274.TM_1323"/>
<dbReference type="PaxDb" id="243274-THEMA_07680"/>
<dbReference type="EnsemblBacteria" id="AAD36395">
    <property type="protein sequence ID" value="AAD36395"/>
    <property type="gene ID" value="TM_1323"/>
</dbReference>
<dbReference type="EnsemblBacteria" id="AAD36405">
    <property type="protein sequence ID" value="AAD36405"/>
    <property type="gene ID" value="TM_1333"/>
</dbReference>
<dbReference type="KEGG" id="tma:TM1323"/>
<dbReference type="KEGG" id="tma:TM1333"/>
<dbReference type="KEGG" id="tmi:THEMA_07680"/>
<dbReference type="KEGG" id="tmi:THEMA_07730"/>
<dbReference type="PATRIC" id="fig|243274.18.peg.1479"/>
<dbReference type="InParanoid" id="Q9WW67"/>
<dbReference type="OrthoDB" id="38334at2"/>
<dbReference type="Proteomes" id="UP000008183">
    <property type="component" value="Chromosome"/>
</dbReference>
<accession>Q9WW67</accession>
<feature type="chain" id="PRO_0000216219" description="Uncharacterized protein TM_1323/TM_1333">
    <location>
        <begin position="1"/>
        <end position="60"/>
    </location>
</feature>
<proteinExistence type="predicted"/>
<reference key="1">
    <citation type="journal article" date="1999" name="Nature">
        <title>Evidence for lateral gene transfer between Archaea and Bacteria from genome sequence of Thermotoga maritima.</title>
        <authorList>
            <person name="Nelson K.E."/>
            <person name="Clayton R.A."/>
            <person name="Gill S.R."/>
            <person name="Gwinn M.L."/>
            <person name="Dodson R.J."/>
            <person name="Haft D.H."/>
            <person name="Hickey E.K."/>
            <person name="Peterson J.D."/>
            <person name="Nelson W.C."/>
            <person name="Ketchum K.A."/>
            <person name="McDonald L.A."/>
            <person name="Utterback T.R."/>
            <person name="Malek J.A."/>
            <person name="Linher K.D."/>
            <person name="Garrett M.M."/>
            <person name="Stewart A.M."/>
            <person name="Cotton M.D."/>
            <person name="Pratt M.S."/>
            <person name="Phillips C.A."/>
            <person name="Richardson D.L."/>
            <person name="Heidelberg J.F."/>
            <person name="Sutton G.G."/>
            <person name="Fleischmann R.D."/>
            <person name="Eisen J.A."/>
            <person name="White O."/>
            <person name="Salzberg S.L."/>
            <person name="Smith H.O."/>
            <person name="Venter J.C."/>
            <person name="Fraser C.M."/>
        </authorList>
    </citation>
    <scope>NUCLEOTIDE SEQUENCE [LARGE SCALE GENOMIC DNA]</scope>
    <source>
        <strain>ATCC 43589 / DSM 3109 / JCM 10099 / NBRC 100826 / MSB8</strain>
    </source>
</reference>
<keyword id="KW-1185">Reference proteome</keyword>
<protein>
    <recommendedName>
        <fullName>Uncharacterized protein TM_1323/TM_1333</fullName>
    </recommendedName>
</protein>
<organism>
    <name type="scientific">Thermotoga maritima (strain ATCC 43589 / DSM 3109 / JCM 10099 / NBRC 100826 / MSB8)</name>
    <dbReference type="NCBI Taxonomy" id="243274"/>
    <lineage>
        <taxon>Bacteria</taxon>
        <taxon>Thermotogati</taxon>
        <taxon>Thermotogota</taxon>
        <taxon>Thermotogae</taxon>
        <taxon>Thermotogales</taxon>
        <taxon>Thermotogaceae</taxon>
        <taxon>Thermotoga</taxon>
    </lineage>
</organism>
<gene>
    <name type="ordered locus">TM_1323</name>
</gene>
<gene>
    <name type="ordered locus">TM_1333</name>
</gene>
<sequence>MIIFLILVLLSTIIFADKVKTDNETHSWKSEITEQVQVAPKSAATCEVTFKGSTAGNQSF</sequence>
<name>Y1323_THEMA</name>